<accession>A8W3I9</accession>
<proteinExistence type="inferred from homology"/>
<keyword id="KW-0934">Plastid</keyword>
<keyword id="KW-0687">Ribonucleoprotein</keyword>
<keyword id="KW-0689">Ribosomal protein</keyword>
<keyword id="KW-0694">RNA-binding</keyword>
<keyword id="KW-0699">rRNA-binding</keyword>
<name>RR4_CUSOB</name>
<geneLocation type="plastid"/>
<reference key="1">
    <citation type="journal article" date="2007" name="BMC Plant Biol.">
        <title>Complete plastid genome sequences suggest strong selection for retention of photosynthetic genes in the parasitic plant genus Cuscuta.</title>
        <authorList>
            <person name="McNeal J.R."/>
            <person name="Kuehl J.V."/>
            <person name="Boore J.L."/>
            <person name="dePamphilis C.W."/>
        </authorList>
    </citation>
    <scope>NUCLEOTIDE SEQUENCE [LARGE SCALE GENOMIC DNA]</scope>
</reference>
<evidence type="ECO:0000250" key="1"/>
<evidence type="ECO:0000305" key="2"/>
<feature type="chain" id="PRO_0000322367" description="Small ribosomal subunit protein uS4c">
    <location>
        <begin position="1"/>
        <end position="197"/>
    </location>
</feature>
<feature type="domain" description="S4 RNA-binding">
    <location>
        <begin position="85"/>
        <end position="161"/>
    </location>
</feature>
<sequence>MSRYRGPRFKKIRRLGALPGLTNKSPRAIRDLRNQSRSEYRIRLEEKQKLRFHYGLTEKQLINYVQIARKAKGSTGKVLLQLLEMRLDNILFRLGMASTIPAARQLVNHRHVLVNGRLVDRPSYRCKPRDIIMPKNTTKSGVLVQNSLELFTGKELANHLNLFSTPYKGLVNKIVDTNWIGLKINELLVVEYYSRQA</sequence>
<gene>
    <name type="primary">rps4</name>
</gene>
<protein>
    <recommendedName>
        <fullName evidence="2">Small ribosomal subunit protein uS4c</fullName>
    </recommendedName>
    <alternativeName>
        <fullName>Plastid 30S ribosomal protein S4</fullName>
    </alternativeName>
</protein>
<dbReference type="EMBL" id="EU189133">
    <property type="protein sequence ID" value="ABW20564.1"/>
    <property type="molecule type" value="Genomic_DNA"/>
</dbReference>
<dbReference type="RefSeq" id="YP_001531219.1">
    <property type="nucleotide sequence ID" value="NC_009949.1"/>
</dbReference>
<dbReference type="SMR" id="A8W3I9"/>
<dbReference type="GeneID" id="5714776"/>
<dbReference type="GO" id="GO:0009536">
    <property type="term" value="C:plastid"/>
    <property type="evidence" value="ECO:0007669"/>
    <property type="project" value="UniProtKB-SubCell"/>
</dbReference>
<dbReference type="GO" id="GO:0015935">
    <property type="term" value="C:small ribosomal subunit"/>
    <property type="evidence" value="ECO:0007669"/>
    <property type="project" value="InterPro"/>
</dbReference>
<dbReference type="GO" id="GO:0019843">
    <property type="term" value="F:rRNA binding"/>
    <property type="evidence" value="ECO:0007669"/>
    <property type="project" value="UniProtKB-KW"/>
</dbReference>
<dbReference type="GO" id="GO:0003735">
    <property type="term" value="F:structural constituent of ribosome"/>
    <property type="evidence" value="ECO:0007669"/>
    <property type="project" value="InterPro"/>
</dbReference>
<dbReference type="GO" id="GO:0042274">
    <property type="term" value="P:ribosomal small subunit biogenesis"/>
    <property type="evidence" value="ECO:0007669"/>
    <property type="project" value="TreeGrafter"/>
</dbReference>
<dbReference type="GO" id="GO:0006412">
    <property type="term" value="P:translation"/>
    <property type="evidence" value="ECO:0007669"/>
    <property type="project" value="InterPro"/>
</dbReference>
<dbReference type="CDD" id="cd00165">
    <property type="entry name" value="S4"/>
    <property type="match status" value="1"/>
</dbReference>
<dbReference type="FunFam" id="1.10.1050.10:FF:000002">
    <property type="entry name" value="30S ribosomal protein S4, chloroplastic"/>
    <property type="match status" value="1"/>
</dbReference>
<dbReference type="FunFam" id="3.10.290.10:FF:000081">
    <property type="entry name" value="30S ribosomal protein S4, chloroplastic"/>
    <property type="match status" value="1"/>
</dbReference>
<dbReference type="Gene3D" id="1.10.1050.10">
    <property type="entry name" value="Ribosomal Protein S4 Delta 41, Chain A, domain 1"/>
    <property type="match status" value="1"/>
</dbReference>
<dbReference type="Gene3D" id="3.10.290.10">
    <property type="entry name" value="RNA-binding S4 domain"/>
    <property type="match status" value="1"/>
</dbReference>
<dbReference type="HAMAP" id="MF_01306_B">
    <property type="entry name" value="Ribosomal_uS4_B"/>
    <property type="match status" value="1"/>
</dbReference>
<dbReference type="InterPro" id="IPR022801">
    <property type="entry name" value="Ribosomal_uS4"/>
</dbReference>
<dbReference type="InterPro" id="IPR005709">
    <property type="entry name" value="Ribosomal_uS4_bac-type"/>
</dbReference>
<dbReference type="InterPro" id="IPR018079">
    <property type="entry name" value="Ribosomal_uS4_CS"/>
</dbReference>
<dbReference type="InterPro" id="IPR001912">
    <property type="entry name" value="Ribosomal_uS4_N"/>
</dbReference>
<dbReference type="InterPro" id="IPR002942">
    <property type="entry name" value="S4_RNA-bd"/>
</dbReference>
<dbReference type="InterPro" id="IPR036986">
    <property type="entry name" value="S4_RNA-bd_sf"/>
</dbReference>
<dbReference type="NCBIfam" id="NF003717">
    <property type="entry name" value="PRK05327.1"/>
    <property type="match status" value="1"/>
</dbReference>
<dbReference type="NCBIfam" id="TIGR01017">
    <property type="entry name" value="rpsD_bact"/>
    <property type="match status" value="1"/>
</dbReference>
<dbReference type="PANTHER" id="PTHR11831">
    <property type="entry name" value="30S 40S RIBOSOMAL PROTEIN"/>
    <property type="match status" value="1"/>
</dbReference>
<dbReference type="PANTHER" id="PTHR11831:SF4">
    <property type="entry name" value="SMALL RIBOSOMAL SUBUNIT PROTEIN US4M"/>
    <property type="match status" value="1"/>
</dbReference>
<dbReference type="Pfam" id="PF00163">
    <property type="entry name" value="Ribosomal_S4"/>
    <property type="match status" value="1"/>
</dbReference>
<dbReference type="Pfam" id="PF01479">
    <property type="entry name" value="S4"/>
    <property type="match status" value="1"/>
</dbReference>
<dbReference type="SMART" id="SM01390">
    <property type="entry name" value="Ribosomal_S4"/>
    <property type="match status" value="1"/>
</dbReference>
<dbReference type="SMART" id="SM00363">
    <property type="entry name" value="S4"/>
    <property type="match status" value="1"/>
</dbReference>
<dbReference type="SUPFAM" id="SSF55174">
    <property type="entry name" value="Alpha-L RNA-binding motif"/>
    <property type="match status" value="1"/>
</dbReference>
<dbReference type="PROSITE" id="PS00632">
    <property type="entry name" value="RIBOSOMAL_S4"/>
    <property type="match status" value="1"/>
</dbReference>
<dbReference type="PROSITE" id="PS50889">
    <property type="entry name" value="S4"/>
    <property type="match status" value="1"/>
</dbReference>
<organism>
    <name type="scientific">Cuscuta obtusiflora</name>
    <name type="common">Peruvian dodder</name>
    <dbReference type="NCBI Taxonomy" id="437280"/>
    <lineage>
        <taxon>Eukaryota</taxon>
        <taxon>Viridiplantae</taxon>
        <taxon>Streptophyta</taxon>
        <taxon>Embryophyta</taxon>
        <taxon>Tracheophyta</taxon>
        <taxon>Spermatophyta</taxon>
        <taxon>Magnoliopsida</taxon>
        <taxon>eudicotyledons</taxon>
        <taxon>Gunneridae</taxon>
        <taxon>Pentapetalae</taxon>
        <taxon>asterids</taxon>
        <taxon>lamiids</taxon>
        <taxon>Solanales</taxon>
        <taxon>Convolvulaceae</taxon>
        <taxon>Cuscuteae</taxon>
        <taxon>Cuscuta</taxon>
        <taxon>Cuscuta subgen. Grammica</taxon>
        <taxon>Cuscuta sect. Cleistogrammica</taxon>
    </lineage>
</organism>
<comment type="function">
    <text evidence="1">One of the primary rRNA binding proteins, it binds directly to 16S rRNA where it nucleates assembly of the body of the 30S subunit.</text>
</comment>
<comment type="function">
    <text evidence="1">With S5 and S12 plays an important role in translational accuracy.</text>
</comment>
<comment type="subunit">
    <text evidence="1">Part of the 30S ribosomal subunit. Contacts protein S5. The interaction surface between S4 and S5 is involved in control of translational fidelity (By similarity).</text>
</comment>
<comment type="subcellular location">
    <subcellularLocation>
        <location>Plastid</location>
    </subcellularLocation>
</comment>
<comment type="similarity">
    <text evidence="2">Belongs to the universal ribosomal protein uS4 family.</text>
</comment>